<sequence>MSTIEERVKKIIGEQLGVKQEEVTNNASFVEDLGADSLDTVELVMALEEEFDTEIPDEEAEKITTVQAAIDYINGHQA</sequence>
<reference key="1">
    <citation type="journal article" date="2008" name="Genome Res.">
        <title>Comparative genome analysis of Salmonella enteritidis PT4 and Salmonella gallinarum 287/91 provides insights into evolutionary and host adaptation pathways.</title>
        <authorList>
            <person name="Thomson N.R."/>
            <person name="Clayton D.J."/>
            <person name="Windhorst D."/>
            <person name="Vernikos G."/>
            <person name="Davidson S."/>
            <person name="Churcher C."/>
            <person name="Quail M.A."/>
            <person name="Stevens M."/>
            <person name="Jones M.A."/>
            <person name="Watson M."/>
            <person name="Barron A."/>
            <person name="Layton A."/>
            <person name="Pickard D."/>
            <person name="Kingsley R.A."/>
            <person name="Bignell A."/>
            <person name="Clark L."/>
            <person name="Harris B."/>
            <person name="Ormond D."/>
            <person name="Abdellah Z."/>
            <person name="Brooks K."/>
            <person name="Cherevach I."/>
            <person name="Chillingworth T."/>
            <person name="Woodward J."/>
            <person name="Norberczak H."/>
            <person name="Lord A."/>
            <person name="Arrowsmith C."/>
            <person name="Jagels K."/>
            <person name="Moule S."/>
            <person name="Mungall K."/>
            <person name="Saunders M."/>
            <person name="Whitehead S."/>
            <person name="Chabalgoity J.A."/>
            <person name="Maskell D."/>
            <person name="Humphreys T."/>
            <person name="Roberts M."/>
            <person name="Barrow P.A."/>
            <person name="Dougan G."/>
            <person name="Parkhill J."/>
        </authorList>
    </citation>
    <scope>NUCLEOTIDE SEQUENCE [LARGE SCALE GENOMIC DNA]</scope>
    <source>
        <strain>287/91 / NCTC 13346</strain>
    </source>
</reference>
<gene>
    <name evidence="1" type="primary">acpP</name>
    <name type="ordered locus">SG1926</name>
</gene>
<proteinExistence type="inferred from homology"/>
<name>ACP_SALG2</name>
<feature type="chain" id="PRO_1000139063" description="Acyl carrier protein">
    <location>
        <begin position="1"/>
        <end position="78"/>
    </location>
</feature>
<feature type="domain" description="Carrier" evidence="2">
    <location>
        <begin position="2"/>
        <end position="77"/>
    </location>
</feature>
<feature type="modified residue" description="O-(pantetheine 4'-phosphoryl)serine" evidence="2">
    <location>
        <position position="37"/>
    </location>
</feature>
<evidence type="ECO:0000255" key="1">
    <source>
        <dbReference type="HAMAP-Rule" id="MF_01217"/>
    </source>
</evidence>
<evidence type="ECO:0000255" key="2">
    <source>
        <dbReference type="PROSITE-ProRule" id="PRU00258"/>
    </source>
</evidence>
<organism>
    <name type="scientific">Salmonella gallinarum (strain 287/91 / NCTC 13346)</name>
    <dbReference type="NCBI Taxonomy" id="550538"/>
    <lineage>
        <taxon>Bacteria</taxon>
        <taxon>Pseudomonadati</taxon>
        <taxon>Pseudomonadota</taxon>
        <taxon>Gammaproteobacteria</taxon>
        <taxon>Enterobacterales</taxon>
        <taxon>Enterobacteriaceae</taxon>
        <taxon>Salmonella</taxon>
    </lineage>
</organism>
<dbReference type="EMBL" id="AM933173">
    <property type="protein sequence ID" value="CAR37777.1"/>
    <property type="molecule type" value="Genomic_DNA"/>
</dbReference>
<dbReference type="RefSeq" id="WP_000103754.1">
    <property type="nucleotide sequence ID" value="NC_011274.1"/>
</dbReference>
<dbReference type="SMR" id="B5RBA6"/>
<dbReference type="GeneID" id="98387866"/>
<dbReference type="KEGG" id="seg:SG1926"/>
<dbReference type="HOGENOM" id="CLU_108696_5_1_6"/>
<dbReference type="UniPathway" id="UPA00094"/>
<dbReference type="Proteomes" id="UP000008321">
    <property type="component" value="Chromosome"/>
</dbReference>
<dbReference type="GO" id="GO:0005829">
    <property type="term" value="C:cytosol"/>
    <property type="evidence" value="ECO:0007669"/>
    <property type="project" value="TreeGrafter"/>
</dbReference>
<dbReference type="GO" id="GO:0016020">
    <property type="term" value="C:membrane"/>
    <property type="evidence" value="ECO:0007669"/>
    <property type="project" value="GOC"/>
</dbReference>
<dbReference type="GO" id="GO:0000035">
    <property type="term" value="F:acyl binding"/>
    <property type="evidence" value="ECO:0007669"/>
    <property type="project" value="TreeGrafter"/>
</dbReference>
<dbReference type="GO" id="GO:0000036">
    <property type="term" value="F:acyl carrier activity"/>
    <property type="evidence" value="ECO:0007669"/>
    <property type="project" value="UniProtKB-UniRule"/>
</dbReference>
<dbReference type="GO" id="GO:0009245">
    <property type="term" value="P:lipid A biosynthetic process"/>
    <property type="evidence" value="ECO:0007669"/>
    <property type="project" value="TreeGrafter"/>
</dbReference>
<dbReference type="FunFam" id="1.10.1200.10:FF:000001">
    <property type="entry name" value="Acyl carrier protein"/>
    <property type="match status" value="1"/>
</dbReference>
<dbReference type="Gene3D" id="1.10.1200.10">
    <property type="entry name" value="ACP-like"/>
    <property type="match status" value="1"/>
</dbReference>
<dbReference type="HAMAP" id="MF_01217">
    <property type="entry name" value="Acyl_carrier"/>
    <property type="match status" value="1"/>
</dbReference>
<dbReference type="InterPro" id="IPR003231">
    <property type="entry name" value="ACP"/>
</dbReference>
<dbReference type="InterPro" id="IPR036736">
    <property type="entry name" value="ACP-like_sf"/>
</dbReference>
<dbReference type="InterPro" id="IPR009081">
    <property type="entry name" value="PP-bd_ACP"/>
</dbReference>
<dbReference type="InterPro" id="IPR006162">
    <property type="entry name" value="Ppantetheine_attach_site"/>
</dbReference>
<dbReference type="NCBIfam" id="TIGR00517">
    <property type="entry name" value="acyl_carrier"/>
    <property type="match status" value="1"/>
</dbReference>
<dbReference type="NCBIfam" id="NF002148">
    <property type="entry name" value="PRK00982.1-2"/>
    <property type="match status" value="1"/>
</dbReference>
<dbReference type="NCBIfam" id="NF002149">
    <property type="entry name" value="PRK00982.1-3"/>
    <property type="match status" value="1"/>
</dbReference>
<dbReference type="NCBIfam" id="NF002150">
    <property type="entry name" value="PRK00982.1-4"/>
    <property type="match status" value="1"/>
</dbReference>
<dbReference type="NCBIfam" id="NF002151">
    <property type="entry name" value="PRK00982.1-5"/>
    <property type="match status" value="1"/>
</dbReference>
<dbReference type="PANTHER" id="PTHR20863">
    <property type="entry name" value="ACYL CARRIER PROTEIN"/>
    <property type="match status" value="1"/>
</dbReference>
<dbReference type="PANTHER" id="PTHR20863:SF76">
    <property type="entry name" value="CARRIER DOMAIN-CONTAINING PROTEIN"/>
    <property type="match status" value="1"/>
</dbReference>
<dbReference type="Pfam" id="PF00550">
    <property type="entry name" value="PP-binding"/>
    <property type="match status" value="1"/>
</dbReference>
<dbReference type="SUPFAM" id="SSF47336">
    <property type="entry name" value="ACP-like"/>
    <property type="match status" value="1"/>
</dbReference>
<dbReference type="PROSITE" id="PS50075">
    <property type="entry name" value="CARRIER"/>
    <property type="match status" value="1"/>
</dbReference>
<dbReference type="PROSITE" id="PS00012">
    <property type="entry name" value="PHOSPHOPANTETHEINE"/>
    <property type="match status" value="1"/>
</dbReference>
<comment type="function">
    <text evidence="1">Carrier of the growing fatty acid chain in fatty acid biosynthesis.</text>
</comment>
<comment type="pathway">
    <text evidence="1">Lipid metabolism; fatty acid biosynthesis.</text>
</comment>
<comment type="subcellular location">
    <subcellularLocation>
        <location evidence="1">Cytoplasm</location>
    </subcellularLocation>
</comment>
<comment type="PTM">
    <text evidence="1">4'-phosphopantetheine is transferred from CoA to a specific serine of apo-ACP by AcpS. This modification is essential for activity because fatty acids are bound in thioester linkage to the sulfhydryl of the prosthetic group.</text>
</comment>
<comment type="similarity">
    <text evidence="1">Belongs to the acyl carrier protein (ACP) family.</text>
</comment>
<accession>B5RBA6</accession>
<keyword id="KW-0963">Cytoplasm</keyword>
<keyword id="KW-0275">Fatty acid biosynthesis</keyword>
<keyword id="KW-0276">Fatty acid metabolism</keyword>
<keyword id="KW-0444">Lipid biosynthesis</keyword>
<keyword id="KW-0443">Lipid metabolism</keyword>
<keyword id="KW-0596">Phosphopantetheine</keyword>
<keyword id="KW-0597">Phosphoprotein</keyword>
<protein>
    <recommendedName>
        <fullName evidence="1">Acyl carrier protein</fullName>
        <shortName evidence="1">ACP</shortName>
    </recommendedName>
</protein>